<dbReference type="EMBL" id="CP000247">
    <property type="protein sequence ID" value="ABG72389.1"/>
    <property type="molecule type" value="Genomic_DNA"/>
</dbReference>
<dbReference type="RefSeq" id="WP_001196062.1">
    <property type="nucleotide sequence ID" value="NC_008253.1"/>
</dbReference>
<dbReference type="SMR" id="Q0T9J0"/>
<dbReference type="GeneID" id="93777620"/>
<dbReference type="KEGG" id="ecp:ECP_4448"/>
<dbReference type="HOGENOM" id="CLU_078938_4_1_6"/>
<dbReference type="Proteomes" id="UP000009182">
    <property type="component" value="Chromosome"/>
</dbReference>
<dbReference type="GO" id="GO:1990904">
    <property type="term" value="C:ribonucleoprotein complex"/>
    <property type="evidence" value="ECO:0007669"/>
    <property type="project" value="UniProtKB-KW"/>
</dbReference>
<dbReference type="GO" id="GO:0005840">
    <property type="term" value="C:ribosome"/>
    <property type="evidence" value="ECO:0007669"/>
    <property type="project" value="UniProtKB-KW"/>
</dbReference>
<dbReference type="GO" id="GO:0019843">
    <property type="term" value="F:rRNA binding"/>
    <property type="evidence" value="ECO:0007669"/>
    <property type="project" value="UniProtKB-UniRule"/>
</dbReference>
<dbReference type="GO" id="GO:0003735">
    <property type="term" value="F:structural constituent of ribosome"/>
    <property type="evidence" value="ECO:0007669"/>
    <property type="project" value="InterPro"/>
</dbReference>
<dbReference type="GO" id="GO:0006412">
    <property type="term" value="P:translation"/>
    <property type="evidence" value="ECO:0007669"/>
    <property type="project" value="UniProtKB-UniRule"/>
</dbReference>
<dbReference type="FunFam" id="3.10.430.100:FF:000001">
    <property type="entry name" value="50S ribosomal protein L9"/>
    <property type="match status" value="1"/>
</dbReference>
<dbReference type="FunFam" id="3.40.5.10:FF:000001">
    <property type="entry name" value="50S ribosomal protein L9"/>
    <property type="match status" value="1"/>
</dbReference>
<dbReference type="Gene3D" id="3.10.430.100">
    <property type="entry name" value="Ribosomal protein L9, C-terminal domain"/>
    <property type="match status" value="1"/>
</dbReference>
<dbReference type="Gene3D" id="3.40.5.10">
    <property type="entry name" value="Ribosomal protein L9, N-terminal domain"/>
    <property type="match status" value="1"/>
</dbReference>
<dbReference type="HAMAP" id="MF_00503">
    <property type="entry name" value="Ribosomal_bL9"/>
    <property type="match status" value="1"/>
</dbReference>
<dbReference type="InterPro" id="IPR000244">
    <property type="entry name" value="Ribosomal_bL9"/>
</dbReference>
<dbReference type="InterPro" id="IPR009027">
    <property type="entry name" value="Ribosomal_bL9/RNase_H1_N"/>
</dbReference>
<dbReference type="InterPro" id="IPR020594">
    <property type="entry name" value="Ribosomal_bL9_bac/chp"/>
</dbReference>
<dbReference type="InterPro" id="IPR020069">
    <property type="entry name" value="Ribosomal_bL9_C"/>
</dbReference>
<dbReference type="InterPro" id="IPR036791">
    <property type="entry name" value="Ribosomal_bL9_C_sf"/>
</dbReference>
<dbReference type="InterPro" id="IPR020070">
    <property type="entry name" value="Ribosomal_bL9_N"/>
</dbReference>
<dbReference type="InterPro" id="IPR036935">
    <property type="entry name" value="Ribosomal_bL9_N_sf"/>
</dbReference>
<dbReference type="NCBIfam" id="TIGR00158">
    <property type="entry name" value="L9"/>
    <property type="match status" value="1"/>
</dbReference>
<dbReference type="PANTHER" id="PTHR21368">
    <property type="entry name" value="50S RIBOSOMAL PROTEIN L9"/>
    <property type="match status" value="1"/>
</dbReference>
<dbReference type="Pfam" id="PF03948">
    <property type="entry name" value="Ribosomal_L9_C"/>
    <property type="match status" value="1"/>
</dbReference>
<dbReference type="Pfam" id="PF01281">
    <property type="entry name" value="Ribosomal_L9_N"/>
    <property type="match status" value="1"/>
</dbReference>
<dbReference type="SUPFAM" id="SSF55658">
    <property type="entry name" value="L9 N-domain-like"/>
    <property type="match status" value="1"/>
</dbReference>
<dbReference type="SUPFAM" id="SSF55653">
    <property type="entry name" value="Ribosomal protein L9 C-domain"/>
    <property type="match status" value="1"/>
</dbReference>
<dbReference type="PROSITE" id="PS00651">
    <property type="entry name" value="RIBOSOMAL_L9"/>
    <property type="match status" value="1"/>
</dbReference>
<sequence>MQVILLDKVANLGSLGDQVNVKAGYARNFLVPQGKAVPATKKNIEFFEARRAELEAKLAEVLAAANARAEKINALETVTIASKAGDEGKLFGSIGTRDIADAVTAAGVEVAKSEVRLPNGVLRTTGEHEVSFQVHSEVFAKVIVNVVAE</sequence>
<evidence type="ECO:0000255" key="1">
    <source>
        <dbReference type="HAMAP-Rule" id="MF_00503"/>
    </source>
</evidence>
<evidence type="ECO:0000305" key="2"/>
<keyword id="KW-0007">Acetylation</keyword>
<keyword id="KW-0687">Ribonucleoprotein</keyword>
<keyword id="KW-0689">Ribosomal protein</keyword>
<keyword id="KW-0694">RNA-binding</keyword>
<keyword id="KW-0699">rRNA-binding</keyword>
<organism>
    <name type="scientific">Escherichia coli O6:K15:H31 (strain 536 / UPEC)</name>
    <dbReference type="NCBI Taxonomy" id="362663"/>
    <lineage>
        <taxon>Bacteria</taxon>
        <taxon>Pseudomonadati</taxon>
        <taxon>Pseudomonadota</taxon>
        <taxon>Gammaproteobacteria</taxon>
        <taxon>Enterobacterales</taxon>
        <taxon>Enterobacteriaceae</taxon>
        <taxon>Escherichia</taxon>
    </lineage>
</organism>
<protein>
    <recommendedName>
        <fullName evidence="1">Large ribosomal subunit protein bL9</fullName>
    </recommendedName>
    <alternativeName>
        <fullName evidence="2">50S ribosomal protein L9</fullName>
    </alternativeName>
</protein>
<comment type="function">
    <text evidence="1">Binds to the 23S rRNA.</text>
</comment>
<comment type="similarity">
    <text evidence="1">Belongs to the bacterial ribosomal protein bL9 family.</text>
</comment>
<gene>
    <name evidence="1" type="primary">rplI</name>
    <name type="ordered locus">ECP_4448</name>
</gene>
<name>RL9_ECOL5</name>
<proteinExistence type="inferred from homology"/>
<feature type="chain" id="PRO_0000258458" description="Large ribosomal subunit protein bL9">
    <location>
        <begin position="1"/>
        <end position="149"/>
    </location>
</feature>
<feature type="modified residue" description="N6-acetyllysine" evidence="1">
    <location>
        <position position="89"/>
    </location>
</feature>
<reference key="1">
    <citation type="journal article" date="2006" name="Mol. Microbiol.">
        <title>Role of pathogenicity island-associated integrases in the genome plasticity of uropathogenic Escherichia coli strain 536.</title>
        <authorList>
            <person name="Hochhut B."/>
            <person name="Wilde C."/>
            <person name="Balling G."/>
            <person name="Middendorf B."/>
            <person name="Dobrindt U."/>
            <person name="Brzuszkiewicz E."/>
            <person name="Gottschalk G."/>
            <person name="Carniel E."/>
            <person name="Hacker J."/>
        </authorList>
    </citation>
    <scope>NUCLEOTIDE SEQUENCE [LARGE SCALE GENOMIC DNA]</scope>
    <source>
        <strain>536 / UPEC</strain>
    </source>
</reference>
<accession>Q0T9J0</accession>